<sequence>MSISSLELQIQTLPDNPGVYQYYDKDGKILYVGKAKNLKKRVSSYFNKVHDTAKTNVLVKKIVTIKHIVVPTETDALLLENNLIKTLQPRYNILLRDDKTYPWICIKKEPFSRLFPTRKMVKDGSEYFGPYTSFKTVSVILDLIKELYPLRSCNFDLSQKNIENYKFKVCLEYHIGNCKGACEGLETLENYQTQINAIREILKGNFKDSMKDFKKVMTNLAQNMHFEEAQKIKEKIEILENYQSRSTIINPKITNIDVFSIVSDEAAAFINFLQISHGSIIRSHTLEIKKKLDETDQELLELAIVELRERFQLLSREIIVPFEVEVGENIKVTVPQLGDKKQILELSVRNAKFYRIEQLKQLQIVDPERHVNRIMAQMKKDLRLSVEPRHIECFDNSNIQGTNPVAACVVFKDGKPSKKDYRHFNIKTVEGPNDFASMEEVVYRRYKRLLDENQPLPNLIIIDGGKGQLSSALKIIDELDLRGKIAIIGIAKRLEELFYPGDSIPLYLDKKSETLKIIQQLRNEAHRFGITFHRDKRSKAALNSSIETIPGIGEKTMLTLIKHFKSVKRLKLAKEKEISDLIGISKAKKITDFYSKLDN</sequence>
<reference key="1">
    <citation type="journal article" date="2007" name="Nat. Biotechnol.">
        <title>Complete genome sequence of the fish pathogen Flavobacterium psychrophilum.</title>
        <authorList>
            <person name="Duchaud E."/>
            <person name="Boussaha M."/>
            <person name="Loux V."/>
            <person name="Bernardet J.-F."/>
            <person name="Michel C."/>
            <person name="Kerouault B."/>
            <person name="Mondot S."/>
            <person name="Nicolas P."/>
            <person name="Bossy R."/>
            <person name="Caron C."/>
            <person name="Bessieres P."/>
            <person name="Gibrat J.-F."/>
            <person name="Claverol S."/>
            <person name="Dumetz F."/>
            <person name="Le Henaff M."/>
            <person name="Benmansour A."/>
        </authorList>
    </citation>
    <scope>NUCLEOTIDE SEQUENCE [LARGE SCALE GENOMIC DNA]</scope>
    <source>
        <strain>ATCC 49511 / DSM 21280 / CIP 103535 / JIP02/86</strain>
    </source>
</reference>
<organism>
    <name type="scientific">Flavobacterium psychrophilum (strain ATCC 49511 / DSM 21280 / CIP 103535 / JIP02/86)</name>
    <dbReference type="NCBI Taxonomy" id="402612"/>
    <lineage>
        <taxon>Bacteria</taxon>
        <taxon>Pseudomonadati</taxon>
        <taxon>Bacteroidota</taxon>
        <taxon>Flavobacteriia</taxon>
        <taxon>Flavobacteriales</taxon>
        <taxon>Flavobacteriaceae</taxon>
        <taxon>Flavobacterium</taxon>
    </lineage>
</organism>
<keyword id="KW-0963">Cytoplasm</keyword>
<keyword id="KW-0227">DNA damage</keyword>
<keyword id="KW-0228">DNA excision</keyword>
<keyword id="KW-0234">DNA repair</keyword>
<keyword id="KW-0267">Excision nuclease</keyword>
<keyword id="KW-1185">Reference proteome</keyword>
<keyword id="KW-0742">SOS response</keyword>
<protein>
    <recommendedName>
        <fullName evidence="1">UvrABC system protein C</fullName>
        <shortName evidence="1">Protein UvrC</shortName>
    </recommendedName>
    <alternativeName>
        <fullName evidence="1">Excinuclease ABC subunit C</fullName>
    </alternativeName>
</protein>
<accession>A6GW65</accession>
<name>UVRC_FLAPJ</name>
<dbReference type="EMBL" id="AM398681">
    <property type="protein sequence ID" value="CAL42338.1"/>
    <property type="molecule type" value="Genomic_DNA"/>
</dbReference>
<dbReference type="RefSeq" id="WP_011962398.1">
    <property type="nucleotide sequence ID" value="NC_009613.3"/>
</dbReference>
<dbReference type="RefSeq" id="YP_001295158.1">
    <property type="nucleotide sequence ID" value="NC_009613.3"/>
</dbReference>
<dbReference type="SMR" id="A6GW65"/>
<dbReference type="STRING" id="402612.FP0222"/>
<dbReference type="EnsemblBacteria" id="CAL42338">
    <property type="protein sequence ID" value="CAL42338"/>
    <property type="gene ID" value="FP0222"/>
</dbReference>
<dbReference type="GeneID" id="66553850"/>
<dbReference type="KEGG" id="fps:FP0222"/>
<dbReference type="PATRIC" id="fig|402612.5.peg.231"/>
<dbReference type="eggNOG" id="COG0322">
    <property type="taxonomic scope" value="Bacteria"/>
</dbReference>
<dbReference type="HOGENOM" id="CLU_014841_3_2_10"/>
<dbReference type="OrthoDB" id="9804933at2"/>
<dbReference type="Proteomes" id="UP000006394">
    <property type="component" value="Chromosome"/>
</dbReference>
<dbReference type="GO" id="GO:0005737">
    <property type="term" value="C:cytoplasm"/>
    <property type="evidence" value="ECO:0007669"/>
    <property type="project" value="UniProtKB-SubCell"/>
</dbReference>
<dbReference type="GO" id="GO:0009380">
    <property type="term" value="C:excinuclease repair complex"/>
    <property type="evidence" value="ECO:0007669"/>
    <property type="project" value="InterPro"/>
</dbReference>
<dbReference type="GO" id="GO:0003677">
    <property type="term" value="F:DNA binding"/>
    <property type="evidence" value="ECO:0007669"/>
    <property type="project" value="UniProtKB-UniRule"/>
</dbReference>
<dbReference type="GO" id="GO:0009381">
    <property type="term" value="F:excinuclease ABC activity"/>
    <property type="evidence" value="ECO:0007669"/>
    <property type="project" value="UniProtKB-UniRule"/>
</dbReference>
<dbReference type="GO" id="GO:0006289">
    <property type="term" value="P:nucleotide-excision repair"/>
    <property type="evidence" value="ECO:0007669"/>
    <property type="project" value="UniProtKB-UniRule"/>
</dbReference>
<dbReference type="GO" id="GO:0009432">
    <property type="term" value="P:SOS response"/>
    <property type="evidence" value="ECO:0007669"/>
    <property type="project" value="UniProtKB-UniRule"/>
</dbReference>
<dbReference type="CDD" id="cd10434">
    <property type="entry name" value="GIY-YIG_UvrC_Cho"/>
    <property type="match status" value="1"/>
</dbReference>
<dbReference type="FunFam" id="3.40.1440.10:FF:000001">
    <property type="entry name" value="UvrABC system protein C"/>
    <property type="match status" value="1"/>
</dbReference>
<dbReference type="Gene3D" id="1.10.150.20">
    <property type="entry name" value="5' to 3' exonuclease, C-terminal subdomain"/>
    <property type="match status" value="1"/>
</dbReference>
<dbReference type="Gene3D" id="3.40.1440.10">
    <property type="entry name" value="GIY-YIG endonuclease"/>
    <property type="match status" value="1"/>
</dbReference>
<dbReference type="Gene3D" id="3.30.420.340">
    <property type="entry name" value="UvrC, RNAse H endonuclease domain"/>
    <property type="match status" value="1"/>
</dbReference>
<dbReference type="HAMAP" id="MF_00203">
    <property type="entry name" value="UvrC"/>
    <property type="match status" value="1"/>
</dbReference>
<dbReference type="InterPro" id="IPR000305">
    <property type="entry name" value="GIY-YIG_endonuc"/>
</dbReference>
<dbReference type="InterPro" id="IPR035901">
    <property type="entry name" value="GIY-YIG_endonuc_sf"/>
</dbReference>
<dbReference type="InterPro" id="IPR047296">
    <property type="entry name" value="GIY-YIG_UvrC_Cho"/>
</dbReference>
<dbReference type="InterPro" id="IPR010994">
    <property type="entry name" value="RuvA_2-like"/>
</dbReference>
<dbReference type="InterPro" id="IPR036876">
    <property type="entry name" value="UVR_dom_sf"/>
</dbReference>
<dbReference type="InterPro" id="IPR050066">
    <property type="entry name" value="UvrABC_protein_C"/>
</dbReference>
<dbReference type="InterPro" id="IPR004791">
    <property type="entry name" value="UvrC"/>
</dbReference>
<dbReference type="InterPro" id="IPR001162">
    <property type="entry name" value="UvrC_RNase_H_dom"/>
</dbReference>
<dbReference type="InterPro" id="IPR038476">
    <property type="entry name" value="UvrC_RNase_H_dom_sf"/>
</dbReference>
<dbReference type="NCBIfam" id="TIGR00194">
    <property type="entry name" value="uvrC"/>
    <property type="match status" value="1"/>
</dbReference>
<dbReference type="PANTHER" id="PTHR30562:SF1">
    <property type="entry name" value="UVRABC SYSTEM PROTEIN C"/>
    <property type="match status" value="1"/>
</dbReference>
<dbReference type="PANTHER" id="PTHR30562">
    <property type="entry name" value="UVRC/OXIDOREDUCTASE"/>
    <property type="match status" value="1"/>
</dbReference>
<dbReference type="Pfam" id="PF01541">
    <property type="entry name" value="GIY-YIG"/>
    <property type="match status" value="1"/>
</dbReference>
<dbReference type="Pfam" id="PF14520">
    <property type="entry name" value="HHH_5"/>
    <property type="match status" value="1"/>
</dbReference>
<dbReference type="Pfam" id="PF22920">
    <property type="entry name" value="UvrC_RNaseH"/>
    <property type="match status" value="1"/>
</dbReference>
<dbReference type="Pfam" id="PF08459">
    <property type="entry name" value="UvrC_RNaseH_dom"/>
    <property type="match status" value="1"/>
</dbReference>
<dbReference type="SMART" id="SM00465">
    <property type="entry name" value="GIYc"/>
    <property type="match status" value="1"/>
</dbReference>
<dbReference type="SUPFAM" id="SSF46600">
    <property type="entry name" value="C-terminal UvrC-binding domain of UvrB"/>
    <property type="match status" value="1"/>
</dbReference>
<dbReference type="SUPFAM" id="SSF82771">
    <property type="entry name" value="GIY-YIG endonuclease"/>
    <property type="match status" value="1"/>
</dbReference>
<dbReference type="SUPFAM" id="SSF47781">
    <property type="entry name" value="RuvA domain 2-like"/>
    <property type="match status" value="1"/>
</dbReference>
<dbReference type="PROSITE" id="PS50164">
    <property type="entry name" value="GIY_YIG"/>
    <property type="match status" value="1"/>
</dbReference>
<dbReference type="PROSITE" id="PS50165">
    <property type="entry name" value="UVRC"/>
    <property type="match status" value="1"/>
</dbReference>
<evidence type="ECO:0000255" key="1">
    <source>
        <dbReference type="HAMAP-Rule" id="MF_00203"/>
    </source>
</evidence>
<proteinExistence type="inferred from homology"/>
<feature type="chain" id="PRO_1000077786" description="UvrABC system protein C">
    <location>
        <begin position="1"/>
        <end position="599"/>
    </location>
</feature>
<feature type="domain" description="GIY-YIG" evidence="1">
    <location>
        <begin position="15"/>
        <end position="93"/>
    </location>
</feature>
<feature type="domain" description="UVR" evidence="1">
    <location>
        <begin position="207"/>
        <end position="242"/>
    </location>
</feature>
<gene>
    <name evidence="1" type="primary">uvrC</name>
    <name type="ordered locus">FP0222</name>
</gene>
<comment type="function">
    <text evidence="1">The UvrABC repair system catalyzes the recognition and processing of DNA lesions. UvrC both incises the 5' and 3' sides of the lesion. The N-terminal half is responsible for the 3' incision and the C-terminal half is responsible for the 5' incision.</text>
</comment>
<comment type="subunit">
    <text evidence="1">Interacts with UvrB in an incision complex.</text>
</comment>
<comment type="subcellular location">
    <subcellularLocation>
        <location evidence="1">Cytoplasm</location>
    </subcellularLocation>
</comment>
<comment type="similarity">
    <text evidence="1">Belongs to the UvrC family.</text>
</comment>